<keyword id="KW-0274">FAD</keyword>
<keyword id="KW-0285">Flavoprotein</keyword>
<keyword id="KW-0503">Monooxygenase</keyword>
<keyword id="KW-0521">NADP</keyword>
<keyword id="KW-0560">Oxidoreductase</keyword>
<dbReference type="EC" id="1.-.-.-" evidence="1"/>
<dbReference type="EMBL" id="LC027936">
    <property type="protein sequence ID" value="BAU61554.1"/>
    <property type="molecule type" value="Genomic_DNA"/>
</dbReference>
<dbReference type="SMR" id="A0A140JWS7"/>
<dbReference type="GO" id="GO:0050660">
    <property type="term" value="F:flavin adenine dinucleotide binding"/>
    <property type="evidence" value="ECO:0007669"/>
    <property type="project" value="InterPro"/>
</dbReference>
<dbReference type="GO" id="GO:0004499">
    <property type="term" value="F:N,N-dimethylaniline monooxygenase activity"/>
    <property type="evidence" value="ECO:0007669"/>
    <property type="project" value="InterPro"/>
</dbReference>
<dbReference type="GO" id="GO:0050661">
    <property type="term" value="F:NADP binding"/>
    <property type="evidence" value="ECO:0007669"/>
    <property type="project" value="InterPro"/>
</dbReference>
<dbReference type="Gene3D" id="3.50.50.60">
    <property type="entry name" value="FAD/NAD(P)-binding domain"/>
    <property type="match status" value="1"/>
</dbReference>
<dbReference type="InterPro" id="IPR036188">
    <property type="entry name" value="FAD/NAD-bd_sf"/>
</dbReference>
<dbReference type="InterPro" id="IPR000960">
    <property type="entry name" value="Flavin_mOase"/>
</dbReference>
<dbReference type="InterPro" id="IPR020946">
    <property type="entry name" value="Flavin_mOase-like"/>
</dbReference>
<dbReference type="InterPro" id="IPR050346">
    <property type="entry name" value="FMO-like"/>
</dbReference>
<dbReference type="PANTHER" id="PTHR23023">
    <property type="entry name" value="DIMETHYLANILINE MONOOXYGENASE"/>
    <property type="match status" value="1"/>
</dbReference>
<dbReference type="Pfam" id="PF00743">
    <property type="entry name" value="FMO-like"/>
    <property type="match status" value="2"/>
</dbReference>
<dbReference type="PIRSF" id="PIRSF000332">
    <property type="entry name" value="FMO"/>
    <property type="match status" value="1"/>
</dbReference>
<dbReference type="PRINTS" id="PR00370">
    <property type="entry name" value="FMOXYGENASE"/>
</dbReference>
<dbReference type="SUPFAM" id="SSF51905">
    <property type="entry name" value="FAD/NAD(P)-binding domain"/>
    <property type="match status" value="1"/>
</dbReference>
<feature type="chain" id="PRO_0000446589" description="Monooxygenase ptmN">
    <location>
        <begin position="1"/>
        <end position="600"/>
    </location>
</feature>
<proteinExistence type="inferred from homology"/>
<comment type="function">
    <text evidence="1">Monooxygenase; part of the gene cluster that mediates the biosynthesis of the indole diterpenes penitrems (PubMed:25831977). The geranylgeranyl diphosphate (GGPP) synthase ptmG catalyzes the first step in penitrem biosynthesis via conversion of farnesyl pyrophosphate and isopentyl pyrophosphate into geranylgeranyl pyrophosphate (GGPP) (PubMed:25831977). Condensation of indole-3-glycerol phosphate with GGPP by the prenyl transferase ptmC then forms 3-geranylgeranylindole (3-GGI) (PubMed:25831977). Epoxidation by the FAD-dependent monooxygenase ptmM leads to a epoxidized-GGI that is substrate of the terpene cyclase ptmB for cyclization to yield paspaline (PubMed:25831977). Paspaline is subsequently converted to 13-desoxypaxilline by the cytochrome P450 monooxygenase ptmP, the latter being then converted to paxilline by the cytochrome P450 monooxygenase ptmQ (PubMed:25831977). Paxilline is converted to beta-paxitriol via C-10 ketoreduction by the short-chain dehydrogenase ptmH which can be monoprenylated at the C-20 by the indole diterpene prenyltransferase ptmD (PubMed:25831977). A two-step elimination (acetylation and elimination) process performed by the O-acetyltransferase ptmV and ptmI leads to the production of the prenylated form of penijanthine (PubMed:25831977). The FAD-linked oxidoreductase ptmO then converts the prenylated form of penijanthine into PC-M5 which is in turn transformed into PC-M4 by the aromatic dimethylallyltransferase ptmE (PubMed:25831977). Five sequential oxidative transformations performed by the cytochrome P450 monooxygenases ptmK, ptmU, ptmL, ptmN and ptmJ yield the various penitrem compounds. PtmK, ptmU and ptmM are involved in the formation of the key bicyclic ring of penitrem C via the formation of the intermediates secopenitrem D and penitrem D. PtmL catalyzes the epoxidation of penitrem D and C to yield penitrem B and F, respectively. PtmJ catalyzes the last benzylic hydroxylation to convert penitrem B to prenitrem E and penitrem F to penitrem A (PubMed:25831977).</text>
</comment>
<comment type="cofactor">
    <cofactor evidence="3">
        <name>FAD</name>
        <dbReference type="ChEBI" id="CHEBI:57692"/>
    </cofactor>
</comment>
<comment type="pathway">
    <text evidence="1">Secondary metabolite biosynthesis.</text>
</comment>
<comment type="similarity">
    <text evidence="3">Belongs to the FMO family.</text>
</comment>
<evidence type="ECO:0000269" key="1">
    <source>
    </source>
</evidence>
<evidence type="ECO:0000303" key="2">
    <source>
    </source>
</evidence>
<evidence type="ECO:0000305" key="3"/>
<sequence>MKVAVIGGGPSGLVTLKYLLAAHHFQPVDPIEVQLFESEDRVGGTFSYRTYDRAELVSSAQLTTFSDYRWHDKSVDYLSAAEYVEYLEGYCDRFGLWPHIRLSTQVEKVERTGKGKHRITVSHDGQTSTWDCDAVAVCSGLHVKPNIPSIPGLDRVPVVFHSSEYKHVRQLGQNTNVMVLGTGETGMDIAYFSVTADSTKSTTVCHRNGFVIGPKRLPEIKLFGRVTSKTPGKALPVDLSRPYLFVNSYVHRKVRGTLQTTLSRWTVKAGSWLVTGTTRGFDQWVGSLPKDKYDESHYFYCKSTKAMPYISAPYRSHSWVHRLRSSIIQAVLPDTGSRKIDLAPWPEYIDEDGVVHFEKNSHPDSKVLLQERRFRPDVLVLATGYTQSFPFLGSDYCTPDHADQRGIWRTGDESVGYIGFVRPSFGAIPPLAEMQVQVWVLNLINRLPGPLVADDSYRLFSNPSGRIEYGVDHDMFAHRLALDIGAAPSFFQALAHGWQVTVFWAMGGTLNTKFRLVGPWAWSGAPRIICDELLDTVTGRRSTIELLTQLIMTAIVCGIPSILLFLADLLVALSIRIYQAISVVSSRPSKGDSAVTENRG</sequence>
<reference key="1">
    <citation type="journal article" date="2015" name="Angew. Chem. Int. Ed.">
        <title>Reconstitution of biosynthetic machinery for the synthesis of the highly elaborated indole diterpene penitrem.</title>
        <authorList>
            <person name="Liu C."/>
            <person name="Tagami K."/>
            <person name="Minami A."/>
            <person name="Matsumoto T."/>
            <person name="Frisvad J.C."/>
            <person name="Suzuki H."/>
            <person name="Ishikawa J."/>
            <person name="Gomi K."/>
            <person name="Oikawa H."/>
        </authorList>
    </citation>
    <scope>NUCLEOTIDE SEQUENCE [GENOMIC DNA]</scope>
    <scope>IDENTIFICATION</scope>
    <scope>FUNCTION</scope>
    <scope>PATHWAY</scope>
    <source>
        <strain>ATCC 90288 / AK-40</strain>
    </source>
</reference>
<organism>
    <name type="scientific">Penicillium ochrochloron</name>
    <dbReference type="NCBI Taxonomy" id="69780"/>
    <lineage>
        <taxon>Eukaryota</taxon>
        <taxon>Fungi</taxon>
        <taxon>Dikarya</taxon>
        <taxon>Ascomycota</taxon>
        <taxon>Pezizomycotina</taxon>
        <taxon>Eurotiomycetes</taxon>
        <taxon>Eurotiomycetidae</taxon>
        <taxon>Eurotiales</taxon>
        <taxon>Aspergillaceae</taxon>
        <taxon>Penicillium</taxon>
    </lineage>
</organism>
<name>PTMN_PENOH</name>
<accession>A0A140JWS7</accession>
<gene>
    <name evidence="2" type="primary">ptmN</name>
</gene>
<protein>
    <recommendedName>
        <fullName evidence="2">Monooxygenase ptmN</fullName>
        <ecNumber evidence="1">1.-.-.-</ecNumber>
    </recommendedName>
    <alternativeName>
        <fullName evidence="2">Penitrem biosynthesis cluster 1 protein N</fullName>
    </alternativeName>
</protein>